<protein>
    <recommendedName>
        <fullName evidence="1">Small ribosomal subunit protein bS6</fullName>
    </recommendedName>
    <alternativeName>
        <fullName evidence="2">30S ribosomal protein S6</fullName>
    </alternativeName>
</protein>
<organism>
    <name type="scientific">Levilactobacillus brevis (strain ATCC 367 / BCRC 12310 / CIP 105137 / JCM 1170 / LMG 11437 / NCIMB 947 / NCTC 947)</name>
    <name type="common">Lactobacillus brevis</name>
    <dbReference type="NCBI Taxonomy" id="387344"/>
    <lineage>
        <taxon>Bacteria</taxon>
        <taxon>Bacillati</taxon>
        <taxon>Bacillota</taxon>
        <taxon>Bacilli</taxon>
        <taxon>Lactobacillales</taxon>
        <taxon>Lactobacillaceae</taxon>
        <taxon>Levilactobacillus</taxon>
    </lineage>
</organism>
<accession>Q03UD8</accession>
<feature type="chain" id="PRO_1000005281" description="Small ribosomal subunit protein bS6">
    <location>
        <begin position="1"/>
        <end position="98"/>
    </location>
</feature>
<comment type="function">
    <text evidence="1">Binds together with bS18 to 16S ribosomal RNA.</text>
</comment>
<comment type="similarity">
    <text evidence="1">Belongs to the bacterial ribosomal protein bS6 family.</text>
</comment>
<reference key="1">
    <citation type="journal article" date="2006" name="Proc. Natl. Acad. Sci. U.S.A.">
        <title>Comparative genomics of the lactic acid bacteria.</title>
        <authorList>
            <person name="Makarova K.S."/>
            <person name="Slesarev A."/>
            <person name="Wolf Y.I."/>
            <person name="Sorokin A."/>
            <person name="Mirkin B."/>
            <person name="Koonin E.V."/>
            <person name="Pavlov A."/>
            <person name="Pavlova N."/>
            <person name="Karamychev V."/>
            <person name="Polouchine N."/>
            <person name="Shakhova V."/>
            <person name="Grigoriev I."/>
            <person name="Lou Y."/>
            <person name="Rohksar D."/>
            <person name="Lucas S."/>
            <person name="Huang K."/>
            <person name="Goodstein D.M."/>
            <person name="Hawkins T."/>
            <person name="Plengvidhya V."/>
            <person name="Welker D."/>
            <person name="Hughes J."/>
            <person name="Goh Y."/>
            <person name="Benson A."/>
            <person name="Baldwin K."/>
            <person name="Lee J.-H."/>
            <person name="Diaz-Muniz I."/>
            <person name="Dosti B."/>
            <person name="Smeianov V."/>
            <person name="Wechter W."/>
            <person name="Barabote R."/>
            <person name="Lorca G."/>
            <person name="Altermann E."/>
            <person name="Barrangou R."/>
            <person name="Ganesan B."/>
            <person name="Xie Y."/>
            <person name="Rawsthorne H."/>
            <person name="Tamir D."/>
            <person name="Parker C."/>
            <person name="Breidt F."/>
            <person name="Broadbent J.R."/>
            <person name="Hutkins R."/>
            <person name="O'Sullivan D."/>
            <person name="Steele J."/>
            <person name="Unlu G."/>
            <person name="Saier M.H. Jr."/>
            <person name="Klaenhammer T."/>
            <person name="Richardson P."/>
            <person name="Kozyavkin S."/>
            <person name="Weimer B.C."/>
            <person name="Mills D.A."/>
        </authorList>
    </citation>
    <scope>NUCLEOTIDE SEQUENCE [LARGE SCALE GENOMIC DNA]</scope>
    <source>
        <strain>ATCC 367 / BCRC 12310 / CIP 105137 / JCM 1170 / LMG 11437 / NCIMB 947 / NCTC 947</strain>
    </source>
</reference>
<proteinExistence type="inferred from homology"/>
<keyword id="KW-1185">Reference proteome</keyword>
<keyword id="KW-0687">Ribonucleoprotein</keyword>
<keyword id="KW-0689">Ribosomal protein</keyword>
<keyword id="KW-0694">RNA-binding</keyword>
<keyword id="KW-0699">rRNA-binding</keyword>
<dbReference type="EMBL" id="CP000416">
    <property type="protein sequence ID" value="ABJ63184.1"/>
    <property type="molecule type" value="Genomic_DNA"/>
</dbReference>
<dbReference type="RefSeq" id="WP_011666822.1">
    <property type="nucleotide sequence ID" value="NC_008497.1"/>
</dbReference>
<dbReference type="SMR" id="Q03UD8"/>
<dbReference type="STRING" id="387344.LVIS_0007"/>
<dbReference type="GeneID" id="56991792"/>
<dbReference type="KEGG" id="lbr:LVIS_0007"/>
<dbReference type="eggNOG" id="COG0360">
    <property type="taxonomic scope" value="Bacteria"/>
</dbReference>
<dbReference type="HOGENOM" id="CLU_113441_5_3_9"/>
<dbReference type="Proteomes" id="UP000001652">
    <property type="component" value="Chromosome"/>
</dbReference>
<dbReference type="GO" id="GO:0005737">
    <property type="term" value="C:cytoplasm"/>
    <property type="evidence" value="ECO:0007669"/>
    <property type="project" value="UniProtKB-ARBA"/>
</dbReference>
<dbReference type="GO" id="GO:1990904">
    <property type="term" value="C:ribonucleoprotein complex"/>
    <property type="evidence" value="ECO:0007669"/>
    <property type="project" value="UniProtKB-KW"/>
</dbReference>
<dbReference type="GO" id="GO:0005840">
    <property type="term" value="C:ribosome"/>
    <property type="evidence" value="ECO:0007669"/>
    <property type="project" value="UniProtKB-KW"/>
</dbReference>
<dbReference type="GO" id="GO:0070181">
    <property type="term" value="F:small ribosomal subunit rRNA binding"/>
    <property type="evidence" value="ECO:0007669"/>
    <property type="project" value="TreeGrafter"/>
</dbReference>
<dbReference type="GO" id="GO:0003735">
    <property type="term" value="F:structural constituent of ribosome"/>
    <property type="evidence" value="ECO:0007669"/>
    <property type="project" value="InterPro"/>
</dbReference>
<dbReference type="GO" id="GO:0006412">
    <property type="term" value="P:translation"/>
    <property type="evidence" value="ECO:0007669"/>
    <property type="project" value="UniProtKB-UniRule"/>
</dbReference>
<dbReference type="CDD" id="cd00473">
    <property type="entry name" value="bS6"/>
    <property type="match status" value="1"/>
</dbReference>
<dbReference type="Gene3D" id="3.30.70.60">
    <property type="match status" value="1"/>
</dbReference>
<dbReference type="HAMAP" id="MF_00360">
    <property type="entry name" value="Ribosomal_bS6"/>
    <property type="match status" value="1"/>
</dbReference>
<dbReference type="InterPro" id="IPR000529">
    <property type="entry name" value="Ribosomal_bS6"/>
</dbReference>
<dbReference type="InterPro" id="IPR035980">
    <property type="entry name" value="Ribosomal_bS6_sf"/>
</dbReference>
<dbReference type="InterPro" id="IPR020814">
    <property type="entry name" value="Ribosomal_S6_plastid/chlpt"/>
</dbReference>
<dbReference type="InterPro" id="IPR014717">
    <property type="entry name" value="Transl_elong_EF1B/ribsomal_bS6"/>
</dbReference>
<dbReference type="NCBIfam" id="TIGR00166">
    <property type="entry name" value="S6"/>
    <property type="match status" value="1"/>
</dbReference>
<dbReference type="PANTHER" id="PTHR21011">
    <property type="entry name" value="MITOCHONDRIAL 28S RIBOSOMAL PROTEIN S6"/>
    <property type="match status" value="1"/>
</dbReference>
<dbReference type="PANTHER" id="PTHR21011:SF1">
    <property type="entry name" value="SMALL RIBOSOMAL SUBUNIT PROTEIN BS6M"/>
    <property type="match status" value="1"/>
</dbReference>
<dbReference type="Pfam" id="PF01250">
    <property type="entry name" value="Ribosomal_S6"/>
    <property type="match status" value="1"/>
</dbReference>
<dbReference type="SUPFAM" id="SSF54995">
    <property type="entry name" value="Ribosomal protein S6"/>
    <property type="match status" value="1"/>
</dbReference>
<evidence type="ECO:0000255" key="1">
    <source>
        <dbReference type="HAMAP-Rule" id="MF_00360"/>
    </source>
</evidence>
<evidence type="ECO:0000305" key="2"/>
<gene>
    <name evidence="1" type="primary">rpsF</name>
    <name type="ordered locus">LVIS_0007</name>
</gene>
<sequence length="98" mass="11381">METTKYEITYIIRPDLDDAAKTALVERFDKILTDNGAELINSKDWSKRRFAYEIGGFNEGIYHVITLNATDDKGLNEFDRLAKINDSILRHMIVKRED</sequence>
<name>RS6_LEVBA</name>